<evidence type="ECO:0000255" key="1">
    <source>
        <dbReference type="HAMAP-Rule" id="MF_00578"/>
    </source>
</evidence>
<accession>A8GA13</accession>
<gene>
    <name evidence="1" type="primary">gshA</name>
    <name type="ordered locus">Spro_0847</name>
</gene>
<sequence>MIPDVSQALSWLEAHPHALKGIRRGIERETLRVTEDGKLATTGHPEKLGAALTHHWITTDFAEALLEFITPVDDNLDHLLTFLRDIHRHVARNLGEERMWPLSMPCFIEAEQDIELAQFGSSNIGRMKTLYREGLKNRYGALMQTISGVHYNFSLPLEFWQAWAGVKDAESGKEQISAGYFRLIRNYYRFGWVIPYLFGASPAICSSFLKGRETALPFERTEQGMCYLPYATSLRLSDLGYTNKSQSNLGITFNDLQSYVEGLKRAIVTPSEEFAKLGVKDGDRHLQLNSNVLQIENELYAPIRPKRVTKSGETPSDALLRGGIEYIEVRSLDINPFSPIGVDAVQARFLDLFLIWCVLADAPEMSSDELLCTRKNWNRVILEGRKPGQTIGIGCDDSREPLAKVGKALFDDLRRVAEVLDSEAGDRQYQQVCDELVAAFDDPELTFSARILKAMKEEGTGRVGLQLAEQYRQMLIEEPLEILTETELAKEQEASWQRQRNVEASDTLSFEEFLKQHGGS</sequence>
<protein>
    <recommendedName>
        <fullName evidence="1">Glutamate--cysteine ligase</fullName>
        <ecNumber evidence="1">6.3.2.2</ecNumber>
    </recommendedName>
    <alternativeName>
        <fullName evidence="1">Gamma-ECS</fullName>
        <shortName evidence="1">GCS</shortName>
    </alternativeName>
    <alternativeName>
        <fullName evidence="1">Gamma-glutamylcysteine synthetase</fullName>
    </alternativeName>
</protein>
<feature type="chain" id="PRO_1000061183" description="Glutamate--cysteine ligase">
    <location>
        <begin position="1"/>
        <end position="520"/>
    </location>
</feature>
<organism>
    <name type="scientific">Serratia proteamaculans (strain 568)</name>
    <dbReference type="NCBI Taxonomy" id="399741"/>
    <lineage>
        <taxon>Bacteria</taxon>
        <taxon>Pseudomonadati</taxon>
        <taxon>Pseudomonadota</taxon>
        <taxon>Gammaproteobacteria</taxon>
        <taxon>Enterobacterales</taxon>
        <taxon>Yersiniaceae</taxon>
        <taxon>Serratia</taxon>
    </lineage>
</organism>
<keyword id="KW-0067">ATP-binding</keyword>
<keyword id="KW-0317">Glutathione biosynthesis</keyword>
<keyword id="KW-0436">Ligase</keyword>
<keyword id="KW-0547">Nucleotide-binding</keyword>
<proteinExistence type="inferred from homology"/>
<name>GSH1_SERP5</name>
<dbReference type="EC" id="6.3.2.2" evidence="1"/>
<dbReference type="EMBL" id="CP000826">
    <property type="protein sequence ID" value="ABV39953.1"/>
    <property type="molecule type" value="Genomic_DNA"/>
</dbReference>
<dbReference type="SMR" id="A8GA13"/>
<dbReference type="STRING" id="399741.Spro_0847"/>
<dbReference type="KEGG" id="spe:Spro_0847"/>
<dbReference type="eggNOG" id="COG2918">
    <property type="taxonomic scope" value="Bacteria"/>
</dbReference>
<dbReference type="HOGENOM" id="CLU_020728_3_0_6"/>
<dbReference type="OrthoDB" id="9803907at2"/>
<dbReference type="UniPathway" id="UPA00142">
    <property type="reaction ID" value="UER00209"/>
</dbReference>
<dbReference type="GO" id="GO:0005829">
    <property type="term" value="C:cytosol"/>
    <property type="evidence" value="ECO:0007669"/>
    <property type="project" value="TreeGrafter"/>
</dbReference>
<dbReference type="GO" id="GO:0005524">
    <property type="term" value="F:ATP binding"/>
    <property type="evidence" value="ECO:0007669"/>
    <property type="project" value="UniProtKB-KW"/>
</dbReference>
<dbReference type="GO" id="GO:0004357">
    <property type="term" value="F:glutamate-cysteine ligase activity"/>
    <property type="evidence" value="ECO:0007669"/>
    <property type="project" value="UniProtKB-UniRule"/>
</dbReference>
<dbReference type="GO" id="GO:0046872">
    <property type="term" value="F:metal ion binding"/>
    <property type="evidence" value="ECO:0007669"/>
    <property type="project" value="TreeGrafter"/>
</dbReference>
<dbReference type="GO" id="GO:0006750">
    <property type="term" value="P:glutathione biosynthetic process"/>
    <property type="evidence" value="ECO:0007669"/>
    <property type="project" value="UniProtKB-UniRule"/>
</dbReference>
<dbReference type="FunFam" id="3.30.590.20:FF:000001">
    <property type="entry name" value="Glutamate--cysteine ligase"/>
    <property type="match status" value="1"/>
</dbReference>
<dbReference type="Gene3D" id="3.30.590.20">
    <property type="match status" value="1"/>
</dbReference>
<dbReference type="HAMAP" id="MF_00578">
    <property type="entry name" value="Glu_cys_ligase"/>
    <property type="match status" value="1"/>
</dbReference>
<dbReference type="InterPro" id="IPR014746">
    <property type="entry name" value="Gln_synth/guanido_kin_cat_dom"/>
</dbReference>
<dbReference type="InterPro" id="IPR007370">
    <property type="entry name" value="Glu_cys_ligase"/>
</dbReference>
<dbReference type="InterPro" id="IPR006334">
    <property type="entry name" value="Glut_cys_ligase"/>
</dbReference>
<dbReference type="NCBIfam" id="TIGR01434">
    <property type="entry name" value="glu_cys_ligase"/>
    <property type="match status" value="1"/>
</dbReference>
<dbReference type="PANTHER" id="PTHR38761">
    <property type="entry name" value="GLUTAMATE--CYSTEINE LIGASE"/>
    <property type="match status" value="1"/>
</dbReference>
<dbReference type="PANTHER" id="PTHR38761:SF1">
    <property type="entry name" value="GLUTAMATE--CYSTEINE LIGASE"/>
    <property type="match status" value="1"/>
</dbReference>
<dbReference type="Pfam" id="PF04262">
    <property type="entry name" value="Glu_cys_ligase"/>
    <property type="match status" value="1"/>
</dbReference>
<dbReference type="SUPFAM" id="SSF55931">
    <property type="entry name" value="Glutamine synthetase/guanido kinase"/>
    <property type="match status" value="1"/>
</dbReference>
<comment type="catalytic activity">
    <reaction evidence="1">
        <text>L-cysteine + L-glutamate + ATP = gamma-L-glutamyl-L-cysteine + ADP + phosphate + H(+)</text>
        <dbReference type="Rhea" id="RHEA:13285"/>
        <dbReference type="ChEBI" id="CHEBI:15378"/>
        <dbReference type="ChEBI" id="CHEBI:29985"/>
        <dbReference type="ChEBI" id="CHEBI:30616"/>
        <dbReference type="ChEBI" id="CHEBI:35235"/>
        <dbReference type="ChEBI" id="CHEBI:43474"/>
        <dbReference type="ChEBI" id="CHEBI:58173"/>
        <dbReference type="ChEBI" id="CHEBI:456216"/>
        <dbReference type="EC" id="6.3.2.2"/>
    </reaction>
</comment>
<comment type="pathway">
    <text evidence="1">Sulfur metabolism; glutathione biosynthesis; glutathione from L-cysteine and L-glutamate: step 1/2.</text>
</comment>
<comment type="similarity">
    <text evidence="1">Belongs to the glutamate--cysteine ligase type 1 family. Type 1 subfamily.</text>
</comment>
<reference key="1">
    <citation type="submission" date="2007-09" db="EMBL/GenBank/DDBJ databases">
        <title>Complete sequence of chromosome of Serratia proteamaculans 568.</title>
        <authorList>
            <consortium name="US DOE Joint Genome Institute"/>
            <person name="Copeland A."/>
            <person name="Lucas S."/>
            <person name="Lapidus A."/>
            <person name="Barry K."/>
            <person name="Glavina del Rio T."/>
            <person name="Dalin E."/>
            <person name="Tice H."/>
            <person name="Pitluck S."/>
            <person name="Chain P."/>
            <person name="Malfatti S."/>
            <person name="Shin M."/>
            <person name="Vergez L."/>
            <person name="Schmutz J."/>
            <person name="Larimer F."/>
            <person name="Land M."/>
            <person name="Hauser L."/>
            <person name="Kyrpides N."/>
            <person name="Kim E."/>
            <person name="Taghavi S."/>
            <person name="Newman L."/>
            <person name="Vangronsveld J."/>
            <person name="van der Lelie D."/>
            <person name="Richardson P."/>
        </authorList>
    </citation>
    <scope>NUCLEOTIDE SEQUENCE [LARGE SCALE GENOMIC DNA]</scope>
    <source>
        <strain>568</strain>
    </source>
</reference>